<accession>Q5VJ77</accession>
<name>SUB1_TRIVC</name>
<proteinExistence type="inferred from homology"/>
<keyword id="KW-0325">Glycoprotein</keyword>
<keyword id="KW-0378">Hydrolase</keyword>
<keyword id="KW-0645">Protease</keyword>
<keyword id="KW-0964">Secreted</keyword>
<keyword id="KW-0720">Serine protease</keyword>
<keyword id="KW-0732">Signal</keyword>
<keyword id="KW-0843">Virulence</keyword>
<keyword id="KW-0865">Zymogen</keyword>
<evidence type="ECO:0000250" key="1"/>
<evidence type="ECO:0000255" key="2"/>
<evidence type="ECO:0000255" key="3">
    <source>
        <dbReference type="PROSITE-ProRule" id="PRU01240"/>
    </source>
</evidence>
<evidence type="ECO:0000256" key="4">
    <source>
        <dbReference type="SAM" id="MobiDB-lite"/>
    </source>
</evidence>
<evidence type="ECO:0000305" key="5"/>
<protein>
    <recommendedName>
        <fullName>Subtilisin-like protease 1</fullName>
        <ecNumber>3.4.21.-</ecNumber>
    </recommendedName>
</protein>
<reference key="1">
    <citation type="submission" date="2003-10" db="EMBL/GenBank/DDBJ databases">
        <title>Subtilisin-like proteases gene family in Dermatophytes.</title>
        <authorList>
            <person name="Jousson O."/>
            <person name="Monod M."/>
        </authorList>
    </citation>
    <scope>NUCLEOTIDE SEQUENCE [GENOMIC DNA]</scope>
</reference>
<sequence>MGVFRFISISLAAVSAANAAQILSMPHAQTVPNSYIVMMKDDTSDDDFNHHQSWLQSTHTHNITRRATIQNAGMRHKYNFSKMKGYSGIFDEETIKDIAKDPKVMFVEPDTIISVHGKVEQSNVPSWGLARISNPQPGAGSYIYDSSAGEGITVYSVDTGVDVNHEDFEGRAIWGSNQVNDGDDRDGSGHGTHTSGTMVGKEFGIAKKAKLVAVKVLGNDGSGPTSGIVAGINWSVEHARQNGGTKKAVMNMSLGGSSSSALNRAAAQAVEQGMFLSVAAGNDNQDAQSSSPASEPSVCTVGSSAEDDSRSSFSNWGPAIDLFAPGSNIISARPGGGSQSMSGTSMAAPHVAGLAAYLMALEGISGGAVCDRLKELGTSSITDAGPGTPTNVLINNGGA</sequence>
<comment type="function">
    <text evidence="1">Secreted subtilisin-like serine protease with keratinolytic activity that contributes to pathogenicity.</text>
</comment>
<comment type="subcellular location">
    <subcellularLocation>
        <location evidence="1">Secreted</location>
    </subcellularLocation>
</comment>
<comment type="similarity">
    <text evidence="5">Belongs to the peptidase S8 family.</text>
</comment>
<feature type="signal peptide" evidence="2">
    <location>
        <begin position="1"/>
        <end position="19"/>
    </location>
</feature>
<feature type="propeptide" id="PRO_0000380763" evidence="1">
    <location>
        <begin position="20"/>
        <end position="116"/>
    </location>
</feature>
<feature type="chain" id="PRO_0000380764" description="Subtilisin-like protease 1">
    <location>
        <begin position="117"/>
        <end position="399" status="greater than"/>
    </location>
</feature>
<feature type="domain" description="Inhibitor I9" evidence="2">
    <location>
        <begin position="34"/>
        <end position="115"/>
    </location>
</feature>
<feature type="domain" description="Peptidase S8" evidence="3">
    <location>
        <begin position="126"/>
        <end position="399"/>
    </location>
</feature>
<feature type="region of interest" description="Disordered" evidence="4">
    <location>
        <begin position="175"/>
        <end position="198"/>
    </location>
</feature>
<feature type="region of interest" description="Disordered" evidence="4">
    <location>
        <begin position="282"/>
        <end position="312"/>
    </location>
</feature>
<feature type="compositionally biased region" description="Polar residues" evidence="4">
    <location>
        <begin position="282"/>
        <end position="294"/>
    </location>
</feature>
<feature type="active site" description="Charge relay system" evidence="3">
    <location>
        <position position="158"/>
    </location>
</feature>
<feature type="active site" description="Charge relay system" evidence="3">
    <location>
        <position position="190"/>
    </location>
</feature>
<feature type="active site" description="Charge relay system" evidence="3">
    <location>
        <position position="345"/>
    </location>
</feature>
<feature type="glycosylation site" description="N-linked (GlcNAc...) asparagine" evidence="2">
    <location>
        <position position="251"/>
    </location>
</feature>
<feature type="non-terminal residue">
    <location>
        <position position="399"/>
    </location>
</feature>
<dbReference type="EC" id="3.4.21.-"/>
<dbReference type="EMBL" id="AY439105">
    <property type="protein sequence ID" value="AAS45673.1"/>
    <property type="molecule type" value="Genomic_DNA"/>
</dbReference>
<dbReference type="SMR" id="Q5VJ77"/>
<dbReference type="MEROPS" id="S08.025"/>
<dbReference type="GlyCosmos" id="Q5VJ77">
    <property type="glycosylation" value="1 site, No reported glycans"/>
</dbReference>
<dbReference type="GO" id="GO:0005576">
    <property type="term" value="C:extracellular region"/>
    <property type="evidence" value="ECO:0007669"/>
    <property type="project" value="UniProtKB-SubCell"/>
</dbReference>
<dbReference type="GO" id="GO:0004252">
    <property type="term" value="F:serine-type endopeptidase activity"/>
    <property type="evidence" value="ECO:0007669"/>
    <property type="project" value="InterPro"/>
</dbReference>
<dbReference type="GO" id="GO:0006508">
    <property type="term" value="P:proteolysis"/>
    <property type="evidence" value="ECO:0007669"/>
    <property type="project" value="UniProtKB-KW"/>
</dbReference>
<dbReference type="CDD" id="cd04077">
    <property type="entry name" value="Peptidases_S8_PCSK9_ProteinaseK_like"/>
    <property type="match status" value="1"/>
</dbReference>
<dbReference type="FunFam" id="3.40.50.200:FF:000014">
    <property type="entry name" value="Proteinase K"/>
    <property type="match status" value="1"/>
</dbReference>
<dbReference type="Gene3D" id="3.30.70.80">
    <property type="entry name" value="Peptidase S8 propeptide/proteinase inhibitor I9"/>
    <property type="match status" value="1"/>
</dbReference>
<dbReference type="Gene3D" id="3.40.50.200">
    <property type="entry name" value="Peptidase S8/S53 domain"/>
    <property type="match status" value="1"/>
</dbReference>
<dbReference type="InterPro" id="IPR034193">
    <property type="entry name" value="PCSK9_ProteinaseK-like"/>
</dbReference>
<dbReference type="InterPro" id="IPR000209">
    <property type="entry name" value="Peptidase_S8/S53_dom"/>
</dbReference>
<dbReference type="InterPro" id="IPR036852">
    <property type="entry name" value="Peptidase_S8/S53_dom_sf"/>
</dbReference>
<dbReference type="InterPro" id="IPR023828">
    <property type="entry name" value="Peptidase_S8_Ser-AS"/>
</dbReference>
<dbReference type="InterPro" id="IPR050131">
    <property type="entry name" value="Peptidase_S8_subtilisin-like"/>
</dbReference>
<dbReference type="InterPro" id="IPR015500">
    <property type="entry name" value="Peptidase_S8_subtilisin-rel"/>
</dbReference>
<dbReference type="InterPro" id="IPR010259">
    <property type="entry name" value="S8pro/Inhibitor_I9"/>
</dbReference>
<dbReference type="InterPro" id="IPR037045">
    <property type="entry name" value="S8pro/Inhibitor_I9_sf"/>
</dbReference>
<dbReference type="PANTHER" id="PTHR43806:SF58">
    <property type="entry name" value="ALKALINE PROTEASE 1-RELATED"/>
    <property type="match status" value="1"/>
</dbReference>
<dbReference type="PANTHER" id="PTHR43806">
    <property type="entry name" value="PEPTIDASE S8"/>
    <property type="match status" value="1"/>
</dbReference>
<dbReference type="Pfam" id="PF05922">
    <property type="entry name" value="Inhibitor_I9"/>
    <property type="match status" value="1"/>
</dbReference>
<dbReference type="Pfam" id="PF00082">
    <property type="entry name" value="Peptidase_S8"/>
    <property type="match status" value="1"/>
</dbReference>
<dbReference type="PRINTS" id="PR00723">
    <property type="entry name" value="SUBTILISIN"/>
</dbReference>
<dbReference type="SUPFAM" id="SSF54897">
    <property type="entry name" value="Protease propeptides/inhibitors"/>
    <property type="match status" value="1"/>
</dbReference>
<dbReference type="SUPFAM" id="SSF52743">
    <property type="entry name" value="Subtilisin-like"/>
    <property type="match status" value="1"/>
</dbReference>
<dbReference type="PROSITE" id="PS51892">
    <property type="entry name" value="SUBTILASE"/>
    <property type="match status" value="1"/>
</dbReference>
<dbReference type="PROSITE" id="PS00138">
    <property type="entry name" value="SUBTILASE_SER"/>
    <property type="match status" value="1"/>
</dbReference>
<gene>
    <name type="primary">SUB1</name>
</gene>
<organism>
    <name type="scientific">Trichophyton verrucosum</name>
    <name type="common">Cattle ringworm fungus</name>
    <dbReference type="NCBI Taxonomy" id="63417"/>
    <lineage>
        <taxon>Eukaryota</taxon>
        <taxon>Fungi</taxon>
        <taxon>Dikarya</taxon>
        <taxon>Ascomycota</taxon>
        <taxon>Pezizomycotina</taxon>
        <taxon>Eurotiomycetes</taxon>
        <taxon>Eurotiomycetidae</taxon>
        <taxon>Onygenales</taxon>
        <taxon>Arthrodermataceae</taxon>
        <taxon>Trichophyton</taxon>
    </lineage>
</organism>